<dbReference type="EC" id="1.3.1.14"/>
<dbReference type="EMBL" id="AE005176">
    <property type="protein sequence ID" value="AAK05444.1"/>
    <property type="molecule type" value="Genomic_DNA"/>
</dbReference>
<dbReference type="PIR" id="B86793">
    <property type="entry name" value="B86793"/>
</dbReference>
<dbReference type="RefSeq" id="NP_267502.1">
    <property type="nucleotide sequence ID" value="NC_002662.1"/>
</dbReference>
<dbReference type="RefSeq" id="WP_010905897.1">
    <property type="nucleotide sequence ID" value="NC_002662.1"/>
</dbReference>
<dbReference type="PDB" id="5KSW">
    <property type="method" value="X-ray"/>
    <property type="resolution" value="2.47 A"/>
    <property type="chains" value="A/C=5-310"/>
</dbReference>
<dbReference type="PDB" id="5UE9">
    <property type="method" value="X-ray"/>
    <property type="resolution" value="2.72 A"/>
    <property type="chains" value="A/C=5-310"/>
</dbReference>
<dbReference type="PDBsum" id="5KSW"/>
<dbReference type="PDBsum" id="5UE9"/>
<dbReference type="SMR" id="Q9CFW8"/>
<dbReference type="PaxDb" id="272623-L182555"/>
<dbReference type="EnsemblBacteria" id="AAK05444">
    <property type="protein sequence ID" value="AAK05444"/>
    <property type="gene ID" value="L182555"/>
</dbReference>
<dbReference type="KEGG" id="lla:L182555"/>
<dbReference type="PATRIC" id="fig|272623.7.peg.1452"/>
<dbReference type="eggNOG" id="COG0167">
    <property type="taxonomic scope" value="Bacteria"/>
</dbReference>
<dbReference type="HOGENOM" id="CLU_042042_0_0_9"/>
<dbReference type="OrthoDB" id="9794954at2"/>
<dbReference type="BioCyc" id="MetaCyc:MONOMER-14471"/>
<dbReference type="SABIO-RK" id="Q9CFW8"/>
<dbReference type="UniPathway" id="UPA00070">
    <property type="reaction ID" value="UER00945"/>
</dbReference>
<dbReference type="Proteomes" id="UP000002196">
    <property type="component" value="Chromosome"/>
</dbReference>
<dbReference type="GO" id="GO:0005737">
    <property type="term" value="C:cytoplasm"/>
    <property type="evidence" value="ECO:0007669"/>
    <property type="project" value="UniProtKB-SubCell"/>
</dbReference>
<dbReference type="GO" id="GO:0004589">
    <property type="term" value="F:dihydroorotate dehydrogenase (NAD+) activity"/>
    <property type="evidence" value="ECO:0007669"/>
    <property type="project" value="UniProtKB-EC"/>
</dbReference>
<dbReference type="GO" id="GO:0006207">
    <property type="term" value="P:'de novo' pyrimidine nucleobase biosynthetic process"/>
    <property type="evidence" value="ECO:0007669"/>
    <property type="project" value="InterPro"/>
</dbReference>
<dbReference type="GO" id="GO:0044205">
    <property type="term" value="P:'de novo' UMP biosynthetic process"/>
    <property type="evidence" value="ECO:0007669"/>
    <property type="project" value="UniProtKB-UniRule"/>
</dbReference>
<dbReference type="CDD" id="cd04740">
    <property type="entry name" value="DHOD_1B_like"/>
    <property type="match status" value="1"/>
</dbReference>
<dbReference type="FunFam" id="3.20.20.70:FF:000069">
    <property type="entry name" value="Dihydroorotate dehydrogenase"/>
    <property type="match status" value="1"/>
</dbReference>
<dbReference type="Gene3D" id="3.20.20.70">
    <property type="entry name" value="Aldolase class I"/>
    <property type="match status" value="1"/>
</dbReference>
<dbReference type="HAMAP" id="MF_00224">
    <property type="entry name" value="DHO_dh_type1"/>
    <property type="match status" value="1"/>
</dbReference>
<dbReference type="InterPro" id="IPR013785">
    <property type="entry name" value="Aldolase_TIM"/>
</dbReference>
<dbReference type="InterPro" id="IPR050074">
    <property type="entry name" value="DHO_dehydrogenase"/>
</dbReference>
<dbReference type="InterPro" id="IPR033888">
    <property type="entry name" value="DHOD_1B"/>
</dbReference>
<dbReference type="InterPro" id="IPR024920">
    <property type="entry name" value="Dihydroorotate_DH_1"/>
</dbReference>
<dbReference type="InterPro" id="IPR012135">
    <property type="entry name" value="Dihydroorotate_DH_1_2"/>
</dbReference>
<dbReference type="InterPro" id="IPR005720">
    <property type="entry name" value="Dihydroorotate_DH_cat"/>
</dbReference>
<dbReference type="InterPro" id="IPR001295">
    <property type="entry name" value="Dihydroorotate_DH_CS"/>
</dbReference>
<dbReference type="InterPro" id="IPR049622">
    <property type="entry name" value="Dihydroorotate_DH_I"/>
</dbReference>
<dbReference type="NCBIfam" id="NF005574">
    <property type="entry name" value="PRK07259.1"/>
    <property type="match status" value="1"/>
</dbReference>
<dbReference type="NCBIfam" id="TIGR01037">
    <property type="entry name" value="pyrD_sub1_fam"/>
    <property type="match status" value="1"/>
</dbReference>
<dbReference type="PANTHER" id="PTHR48109:SF1">
    <property type="entry name" value="DIHYDROOROTATE DEHYDROGENASE (FUMARATE)"/>
    <property type="match status" value="1"/>
</dbReference>
<dbReference type="PANTHER" id="PTHR48109">
    <property type="entry name" value="DIHYDROOROTATE DEHYDROGENASE (QUINONE), MITOCHONDRIAL-RELATED"/>
    <property type="match status" value="1"/>
</dbReference>
<dbReference type="Pfam" id="PF01180">
    <property type="entry name" value="DHO_dh"/>
    <property type="match status" value="1"/>
</dbReference>
<dbReference type="PIRSF" id="PIRSF000164">
    <property type="entry name" value="DHO_oxidase"/>
    <property type="match status" value="1"/>
</dbReference>
<dbReference type="SUPFAM" id="SSF51395">
    <property type="entry name" value="FMN-linked oxidoreductases"/>
    <property type="match status" value="1"/>
</dbReference>
<dbReference type="PROSITE" id="PS00911">
    <property type="entry name" value="DHODEHASE_1"/>
    <property type="match status" value="1"/>
</dbReference>
<dbReference type="PROSITE" id="PS00912">
    <property type="entry name" value="DHODEHASE_2"/>
    <property type="match status" value="1"/>
</dbReference>
<proteinExistence type="evidence at protein level"/>
<keyword id="KW-0002">3D-structure</keyword>
<keyword id="KW-0963">Cytoplasm</keyword>
<keyword id="KW-0285">Flavoprotein</keyword>
<keyword id="KW-0288">FMN</keyword>
<keyword id="KW-0520">NAD</keyword>
<keyword id="KW-0560">Oxidoreductase</keyword>
<keyword id="KW-0665">Pyrimidine biosynthesis</keyword>
<keyword id="KW-1185">Reference proteome</keyword>
<accession>Q9CFW8</accession>
<protein>
    <recommendedName>
        <fullName>Dihydroorotate dehydrogenase B (NAD(+)), catalytic subunit</fullName>
        <shortName>DHOD B</shortName>
        <shortName>DHODase B</shortName>
        <shortName>DHOdehase B</shortName>
        <ecNumber>1.3.1.14</ecNumber>
    </recommendedName>
    <alternativeName>
        <fullName>Dihydroorotate oxidase B</fullName>
    </alternativeName>
    <alternativeName>
        <fullName>Orotate reductase (NADH)</fullName>
    </alternativeName>
</protein>
<feature type="chain" id="PRO_0000148395" description="Dihydroorotate dehydrogenase B (NAD(+)), catalytic subunit">
    <location>
        <begin position="1"/>
        <end position="311"/>
    </location>
</feature>
<feature type="active site" description="Nucleophile">
    <location>
        <position position="135"/>
    </location>
</feature>
<feature type="binding site" evidence="1">
    <location>
        <position position="24"/>
    </location>
    <ligand>
        <name>FMN</name>
        <dbReference type="ChEBI" id="CHEBI:58210"/>
    </ligand>
</feature>
<feature type="binding site" evidence="1">
    <location>
        <begin position="48"/>
        <end position="49"/>
    </location>
    <ligand>
        <name>FMN</name>
        <dbReference type="ChEBI" id="CHEBI:58210"/>
    </ligand>
</feature>
<feature type="binding site" evidence="1">
    <location>
        <position position="48"/>
    </location>
    <ligand>
        <name>substrate</name>
    </ligand>
</feature>
<feature type="binding site" evidence="1">
    <location>
        <begin position="72"/>
        <end position="76"/>
    </location>
    <ligand>
        <name>substrate</name>
    </ligand>
</feature>
<feature type="binding site" evidence="1">
    <location>
        <position position="104"/>
    </location>
    <ligand>
        <name>FMN</name>
        <dbReference type="ChEBI" id="CHEBI:58210"/>
    </ligand>
</feature>
<feature type="binding site" evidence="1">
    <location>
        <position position="132"/>
    </location>
    <ligand>
        <name>FMN</name>
        <dbReference type="ChEBI" id="CHEBI:58210"/>
    </ligand>
</feature>
<feature type="binding site" evidence="1">
    <location>
        <position position="132"/>
    </location>
    <ligand>
        <name>substrate</name>
    </ligand>
</feature>
<feature type="binding site" evidence="1">
    <location>
        <position position="170"/>
    </location>
    <ligand>
        <name>FMN</name>
        <dbReference type="ChEBI" id="CHEBI:58210"/>
    </ligand>
</feature>
<feature type="binding site" evidence="1">
    <location>
        <position position="196"/>
    </location>
    <ligand>
        <name>FMN</name>
        <dbReference type="ChEBI" id="CHEBI:58210"/>
    </ligand>
</feature>
<feature type="binding site" evidence="1">
    <location>
        <begin position="197"/>
        <end position="198"/>
    </location>
    <ligand>
        <name>substrate</name>
    </ligand>
</feature>
<feature type="binding site" evidence="1">
    <location>
        <position position="222"/>
    </location>
    <ligand>
        <name>FMN</name>
        <dbReference type="ChEBI" id="CHEBI:58210"/>
    </ligand>
</feature>
<feature type="binding site" evidence="1">
    <location>
        <begin position="248"/>
        <end position="249"/>
    </location>
    <ligand>
        <name>FMN</name>
        <dbReference type="ChEBI" id="CHEBI:58210"/>
    </ligand>
</feature>
<feature type="binding site" evidence="1">
    <location>
        <begin position="270"/>
        <end position="271"/>
    </location>
    <ligand>
        <name>FMN</name>
        <dbReference type="ChEBI" id="CHEBI:58210"/>
    </ligand>
</feature>
<feature type="strand" evidence="3">
    <location>
        <begin position="9"/>
        <end position="11"/>
    </location>
</feature>
<feature type="strand" evidence="3">
    <location>
        <begin position="14"/>
        <end position="22"/>
    </location>
</feature>
<feature type="helix" evidence="3">
    <location>
        <begin position="33"/>
        <end position="35"/>
    </location>
</feature>
<feature type="helix" evidence="3">
    <location>
        <begin position="39"/>
        <end position="41"/>
    </location>
</feature>
<feature type="strand" evidence="3">
    <location>
        <begin position="45"/>
        <end position="50"/>
    </location>
</feature>
<feature type="strand" evidence="3">
    <location>
        <begin position="63"/>
        <end position="66"/>
    </location>
</feature>
<feature type="strand" evidence="3">
    <location>
        <begin position="69"/>
        <end position="72"/>
    </location>
</feature>
<feature type="helix" evidence="3">
    <location>
        <begin position="81"/>
        <end position="86"/>
    </location>
</feature>
<feature type="helix" evidence="3">
    <location>
        <begin position="88"/>
        <end position="95"/>
    </location>
</feature>
<feature type="strand" evidence="3">
    <location>
        <begin position="101"/>
        <end position="105"/>
    </location>
</feature>
<feature type="helix" evidence="3">
    <location>
        <begin position="110"/>
        <end position="120"/>
    </location>
</feature>
<feature type="strand" evidence="3">
    <location>
        <begin position="126"/>
        <end position="132"/>
    </location>
</feature>
<feature type="turn" evidence="3">
    <location>
        <begin position="138"/>
        <end position="141"/>
    </location>
</feature>
<feature type="helix" evidence="4">
    <location>
        <begin position="145"/>
        <end position="147"/>
    </location>
</feature>
<feature type="helix" evidence="3">
    <location>
        <begin position="149"/>
        <end position="160"/>
    </location>
</feature>
<feature type="strand" evidence="3">
    <location>
        <begin position="167"/>
        <end position="170"/>
    </location>
</feature>
<feature type="helix" evidence="3">
    <location>
        <begin position="178"/>
        <end position="187"/>
    </location>
</feature>
<feature type="strand" evidence="3">
    <location>
        <begin position="191"/>
        <end position="195"/>
    </location>
</feature>
<feature type="strand" evidence="3">
    <location>
        <begin position="199"/>
        <end position="201"/>
    </location>
</feature>
<feature type="turn" evidence="3">
    <location>
        <begin position="206"/>
        <end position="208"/>
    </location>
</feature>
<feature type="strand" evidence="3">
    <location>
        <begin position="210"/>
        <end position="213"/>
    </location>
</feature>
<feature type="strand" evidence="3">
    <location>
        <begin position="216"/>
        <end position="222"/>
    </location>
</feature>
<feature type="helix" evidence="3">
    <location>
        <begin position="223"/>
        <end position="225"/>
    </location>
</feature>
<feature type="helix" evidence="3">
    <location>
        <begin position="226"/>
        <end position="237"/>
    </location>
</feature>
<feature type="strand" evidence="3">
    <location>
        <begin position="244"/>
        <end position="246"/>
    </location>
</feature>
<feature type="helix" evidence="3">
    <location>
        <begin position="253"/>
        <end position="262"/>
    </location>
</feature>
<feature type="strand" evidence="3">
    <location>
        <begin position="265"/>
        <end position="269"/>
    </location>
</feature>
<feature type="helix" evidence="3">
    <location>
        <begin position="272"/>
        <end position="275"/>
    </location>
</feature>
<feature type="helix" evidence="3">
    <location>
        <begin position="279"/>
        <end position="293"/>
    </location>
</feature>
<feature type="helix" evidence="3">
    <location>
        <begin position="299"/>
        <end position="307"/>
    </location>
</feature>
<sequence>MTENNRLSVKLPGLDLKNPIIPASGCFGFGEEYAKYYDLNKLGSIMVKATTLHPRFGNPTPRVAETASGMLNAIGLQNPGLEVIMAEKLPWLNENFPDLPIIANVAGSEEDDYVAVCAKIGDAPNVKVIELNISCPNVKHGGQAFGTDPDVAAALVKACKAVSKVPLYVKLSPNVTDIVPIAKAVEAAGADGLTMINTLMGVRFDLKTRKPVLANITGGLSGPAIKPVALKLIHQVAQVVDIPIIGMGGVESAQDVLEMYMAGASAVAVGTANFADPFVCPKIIEKLPEVMDQYGIDSLENLIQEVKNSKK</sequence>
<reference key="1">
    <citation type="journal article" date="2001" name="Genome Res.">
        <title>The complete genome sequence of the lactic acid bacterium Lactococcus lactis ssp. lactis IL1403.</title>
        <authorList>
            <person name="Bolotin A."/>
            <person name="Wincker P."/>
            <person name="Mauger S."/>
            <person name="Jaillon O."/>
            <person name="Malarme K."/>
            <person name="Weissenbach J."/>
            <person name="Ehrlich S.D."/>
            <person name="Sorokin A."/>
        </authorList>
    </citation>
    <scope>NUCLEOTIDE SEQUENCE [LARGE SCALE GENOMIC DNA]</scope>
    <source>
        <strain>IL1403</strain>
    </source>
</reference>
<gene>
    <name type="primary">pyrDB</name>
    <name type="synonym">pydB</name>
    <name type="ordered locus">LL1346</name>
    <name type="ORF">L182555</name>
</gene>
<comment type="function">
    <text evidence="1">Catalyzes the conversion of dihydroorotate to orotate with NAD(+) as electron acceptor.</text>
</comment>
<comment type="catalytic activity">
    <reaction>
        <text>(S)-dihydroorotate + NAD(+) = orotate + NADH + H(+)</text>
        <dbReference type="Rhea" id="RHEA:13513"/>
        <dbReference type="ChEBI" id="CHEBI:15378"/>
        <dbReference type="ChEBI" id="CHEBI:30839"/>
        <dbReference type="ChEBI" id="CHEBI:30864"/>
        <dbReference type="ChEBI" id="CHEBI:57540"/>
        <dbReference type="ChEBI" id="CHEBI:57945"/>
        <dbReference type="EC" id="1.3.1.14"/>
    </reaction>
</comment>
<comment type="cofactor">
    <cofactor evidence="1">
        <name>FMN</name>
        <dbReference type="ChEBI" id="CHEBI:58210"/>
    </cofactor>
    <text evidence="1">Binds 1 FMN per subunit.</text>
</comment>
<comment type="pathway">
    <text>Pyrimidine metabolism; UMP biosynthesis via de novo pathway; orotate from (S)-dihydroorotate (NAD(+) route): step 1/1.</text>
</comment>
<comment type="subunit">
    <text evidence="1">Heterotetramer of 2 PyrK and 2 PyrD type B subunits.</text>
</comment>
<comment type="subcellular location">
    <subcellularLocation>
        <location evidence="1">Cytoplasm</location>
    </subcellularLocation>
</comment>
<comment type="similarity">
    <text evidence="2">Belongs to the dihydroorotate dehydrogenase family. Type 1 subfamily.</text>
</comment>
<organism>
    <name type="scientific">Lactococcus lactis subsp. lactis (strain IL1403)</name>
    <name type="common">Streptococcus lactis</name>
    <dbReference type="NCBI Taxonomy" id="272623"/>
    <lineage>
        <taxon>Bacteria</taxon>
        <taxon>Bacillati</taxon>
        <taxon>Bacillota</taxon>
        <taxon>Bacilli</taxon>
        <taxon>Lactobacillales</taxon>
        <taxon>Streptococcaceae</taxon>
        <taxon>Lactococcus</taxon>
    </lineage>
</organism>
<evidence type="ECO:0000250" key="1"/>
<evidence type="ECO:0000305" key="2"/>
<evidence type="ECO:0007829" key="3">
    <source>
        <dbReference type="PDB" id="5KSW"/>
    </source>
</evidence>
<evidence type="ECO:0007829" key="4">
    <source>
        <dbReference type="PDB" id="5UE9"/>
    </source>
</evidence>
<name>PYRDB_LACLA</name>